<comment type="function">
    <text evidence="2 3">Calcium-dependent acyltransferase that catalyzes the formation of covalent bonds between peptide-bound glutamine and various primary amines, such as gamma-amino group of peptide-bound lysine, or mono- and polyamines, thereby producing cross-linked or aminated proteins, respectively. Involved in many biological processes, such as bone development, angiogenesis, wound healing, cellular differentiation, chromatin modification and apoptosis. Acts as a protein-glutamine gamma-glutamyltransferase by mediating the cross-linking of proteins: under physiological conditions, the protein cross-linking activity is inhibited by GTP; inhibition is relieved by Ca(2+) in response to various stresses. When secreted, catalyzes cross-linking of proteins of the extracellular matrix, resulting in the formation of scaffolds. Plays a key role during apoptosis, both by (1) promoting the cross-linking of cytoskeletal proteins resulting in condensation of the cytoplasm, and by (2) mediating cross-linking proteins of the extracellular matrix, resulting in the irreversible formation of scaffolds that stabilize the integrity of the dying cells before their clearance by phagocytosis, thereby preventing the leakage of harmful intracellular components. In addition to protein cross-linking, can use different monoamine substrates to catalyze a vast array of protein post-translational modifications: mediates aminylation of serotonin, dopamine, noradrenaline or histamine into glutamine residues of target proteins to generate protein serotonylation, dopaminylation, noradrenalinylation or histaminylation, respectively (By similarity). Mediates protein serotonylation of small GTPases during activation and aggregation of platelets, leading to constitutive activation of these GTPases (By similarity). Plays a key role in chromatin organization by mediating serotonylation and dopaminylation of histone H3. Catalyzes serotonylation of 'Gln-5' of histone H3 (H3Q5ser) during serotonergic neuron differentiation, thereby facilitating transcription. Acts as a mediator of neurotransmission-independent role of nuclear dopamine in ventral tegmental area (VTA) neurons: catalyzes dopaminylation of 'Gln-5' of histone H3 (H3Q5dop), thereby regulating relapse-related transcriptional plasticity in the reward system. Also acts as a protein deamidase by mediating the side chain deamidation of specific glutamine residues of proteins to glutamate. May also act as an isopeptidase cleaving the previously formed cross-links. Also able to participate in signaling pathways independently of its acyltransferase activity: acts as a signal transducer in alpha-1 adrenergic receptor-mediated stimulation of phospholipase C-delta (PLCD) activity and is required for coupling alpha-1 adrenergic agonists to the stimulation of phosphoinositide lipid metabolism (By similarity).</text>
</comment>
<comment type="catalytic activity">
    <reaction evidence="3 5">
        <text>L-glutaminyl-[protein] + L-lysyl-[protein] = [protein]-L-lysyl-N(6)-5-L-glutamyl-[protein] + NH4(+)</text>
        <dbReference type="Rhea" id="RHEA:54816"/>
        <dbReference type="Rhea" id="RHEA-COMP:9752"/>
        <dbReference type="Rhea" id="RHEA-COMP:10207"/>
        <dbReference type="Rhea" id="RHEA-COMP:14005"/>
        <dbReference type="ChEBI" id="CHEBI:28938"/>
        <dbReference type="ChEBI" id="CHEBI:29969"/>
        <dbReference type="ChEBI" id="CHEBI:30011"/>
        <dbReference type="ChEBI" id="CHEBI:138370"/>
        <dbReference type="EC" id="2.3.2.13"/>
    </reaction>
    <physiologicalReaction direction="left-to-right" evidence="3">
        <dbReference type="Rhea" id="RHEA:54817"/>
    </physiologicalReaction>
</comment>
<comment type="catalytic activity">
    <reaction evidence="3">
        <text>L-glutaminyl-[protein] + serotonin = 5-serotonyl-L-glutamyl-[protein] + NH4(+)</text>
        <dbReference type="Rhea" id="RHEA:66552"/>
        <dbReference type="Rhea" id="RHEA-COMP:10207"/>
        <dbReference type="Rhea" id="RHEA-COMP:17052"/>
        <dbReference type="ChEBI" id="CHEBI:28938"/>
        <dbReference type="ChEBI" id="CHEBI:30011"/>
        <dbReference type="ChEBI" id="CHEBI:167174"/>
        <dbReference type="ChEBI" id="CHEBI:350546"/>
    </reaction>
    <physiologicalReaction direction="left-to-right" evidence="3">
        <dbReference type="Rhea" id="RHEA:66553"/>
    </physiologicalReaction>
</comment>
<comment type="catalytic activity">
    <reaction evidence="3">
        <text>L-glutaminyl-[protein] + dopamine = 5-dopaminyl-L-glutamyl-[protein] + NH4(+)</text>
        <dbReference type="Rhea" id="RHEA:66556"/>
        <dbReference type="Rhea" id="RHEA-COMP:10207"/>
        <dbReference type="Rhea" id="RHEA-COMP:17053"/>
        <dbReference type="ChEBI" id="CHEBI:28938"/>
        <dbReference type="ChEBI" id="CHEBI:30011"/>
        <dbReference type="ChEBI" id="CHEBI:59905"/>
        <dbReference type="ChEBI" id="CHEBI:167175"/>
    </reaction>
    <physiologicalReaction direction="left-to-right" evidence="3">
        <dbReference type="Rhea" id="RHEA:66557"/>
    </physiologicalReaction>
</comment>
<comment type="catalytic activity">
    <reaction evidence="3">
        <text>L-glutaminyl-[protein] + histamine = 5-histaminyl-L-glutamyl-[protein] + NH4(+)</text>
        <dbReference type="Rhea" id="RHEA:66564"/>
        <dbReference type="Rhea" id="RHEA-COMP:10207"/>
        <dbReference type="Rhea" id="RHEA-COMP:17056"/>
        <dbReference type="ChEBI" id="CHEBI:28938"/>
        <dbReference type="ChEBI" id="CHEBI:30011"/>
        <dbReference type="ChEBI" id="CHEBI:58432"/>
        <dbReference type="ChEBI" id="CHEBI:167179"/>
    </reaction>
    <physiologicalReaction direction="left-to-right" evidence="3">
        <dbReference type="Rhea" id="RHEA:66565"/>
    </physiologicalReaction>
</comment>
<comment type="catalytic activity">
    <reaction evidence="2">
        <text>L-glutaminyl-[protein] + (R)-noradrenaline = 5-(R)-noradrenalinyl-L-glutamyl-[protein] + NH4(+)</text>
        <dbReference type="Rhea" id="RHEA:66560"/>
        <dbReference type="Rhea" id="RHEA-COMP:10207"/>
        <dbReference type="Rhea" id="RHEA-COMP:17054"/>
        <dbReference type="ChEBI" id="CHEBI:28938"/>
        <dbReference type="ChEBI" id="CHEBI:30011"/>
        <dbReference type="ChEBI" id="CHEBI:72587"/>
        <dbReference type="ChEBI" id="CHEBI:167178"/>
    </reaction>
    <physiologicalReaction direction="left-to-right" evidence="2">
        <dbReference type="Rhea" id="RHEA:66561"/>
    </physiologicalReaction>
</comment>
<comment type="catalytic activity">
    <reaction evidence="3">
        <text>L-glutaminyl-[protein] + H2O = L-glutamyl-[protein] + NH4(+)</text>
        <dbReference type="Rhea" id="RHEA:16441"/>
        <dbReference type="Rhea" id="RHEA-COMP:10207"/>
        <dbReference type="Rhea" id="RHEA-COMP:10208"/>
        <dbReference type="ChEBI" id="CHEBI:15377"/>
        <dbReference type="ChEBI" id="CHEBI:28938"/>
        <dbReference type="ChEBI" id="CHEBI:29973"/>
        <dbReference type="ChEBI" id="CHEBI:30011"/>
        <dbReference type="EC" id="3.5.1.44"/>
    </reaction>
    <physiologicalReaction direction="left-to-right" evidence="3">
        <dbReference type="Rhea" id="RHEA:16442"/>
    </physiologicalReaction>
</comment>
<comment type="cofactor">
    <cofactor evidence="3">
        <name>Ca(2+)</name>
        <dbReference type="ChEBI" id="CHEBI:29108"/>
    </cofactor>
</comment>
<comment type="activity regulation">
    <text evidence="3">Acyltransferase activity is regulated by the binding of GTP and Ca(2+): inactivated by GTP, which stabilizes its closed structure, thereby obstructing the accessibility of substrates to the active sites. In contrast, Ca(2+) acts as a cofactor by inducing conformational change to the active open form. In absence of Ca(2+), Mg(2+) may bind Ca(2+)-binding sites, promoting GTP-binding and subsequent inhibition of the acyltransferase activity.</text>
</comment>
<comment type="subunit">
    <text evidence="3">Monomer.</text>
</comment>
<comment type="subcellular location">
    <subcellularLocation>
        <location evidence="3">Cytoplasm</location>
        <location evidence="3">Cytosol</location>
    </subcellularLocation>
    <subcellularLocation>
        <location evidence="3">Nucleus</location>
    </subcellularLocation>
    <subcellularLocation>
        <location evidence="3">Chromosome</location>
    </subcellularLocation>
    <subcellularLocation>
        <location evidence="3">Secreted</location>
        <location evidence="3">Extracellular space</location>
        <location evidence="3">Extracellular matrix</location>
    </subcellularLocation>
    <subcellularLocation>
        <location evidence="4">Cell membrane</location>
    </subcellularLocation>
    <subcellularLocation>
        <location evidence="3">Mitochondrion</location>
    </subcellularLocation>
    <text evidence="3">Mainly localizes to the cytosol. Present at much lower level in the nucleus and chromatin. Also secreted via a non-classical secretion pathway to the extracellular matrix.</text>
</comment>
<comment type="similarity">
    <text evidence="8">Belongs to the transglutaminase superfamily. Transglutaminase family.</text>
</comment>
<gene>
    <name evidence="3" type="primary">tgm2</name>
</gene>
<dbReference type="EC" id="2.3.2.13" evidence="3"/>
<dbReference type="EC" id="3.4.-.-" evidence="3"/>
<dbReference type="EC" id="3.5.1.44" evidence="3"/>
<dbReference type="EC" id="2.3.1.-" evidence="3 2"/>
<dbReference type="EMBL" id="S79761">
    <property type="protein sequence ID" value="AAB35370.1"/>
    <property type="molecule type" value="mRNA"/>
</dbReference>
<dbReference type="PIR" id="S66662">
    <property type="entry name" value="S66662"/>
</dbReference>
<dbReference type="PDB" id="1G0D">
    <property type="method" value="X-ray"/>
    <property type="resolution" value="2.50 A"/>
    <property type="chains" value="A=1-695"/>
</dbReference>
<dbReference type="PDBsum" id="1G0D"/>
<dbReference type="SMR" id="P52181"/>
<dbReference type="EvolutionaryTrace" id="P52181"/>
<dbReference type="GO" id="GO:0000785">
    <property type="term" value="C:chromatin"/>
    <property type="evidence" value="ECO:0000250"/>
    <property type="project" value="UniProtKB"/>
</dbReference>
<dbReference type="GO" id="GO:0005829">
    <property type="term" value="C:cytosol"/>
    <property type="evidence" value="ECO:0000250"/>
    <property type="project" value="UniProtKB"/>
</dbReference>
<dbReference type="GO" id="GO:0005576">
    <property type="term" value="C:extracellular region"/>
    <property type="evidence" value="ECO:0007669"/>
    <property type="project" value="UniProtKB-KW"/>
</dbReference>
<dbReference type="GO" id="GO:0005739">
    <property type="term" value="C:mitochondrion"/>
    <property type="evidence" value="ECO:0007669"/>
    <property type="project" value="UniProtKB-SubCell"/>
</dbReference>
<dbReference type="GO" id="GO:0005634">
    <property type="term" value="C:nucleus"/>
    <property type="evidence" value="ECO:0000250"/>
    <property type="project" value="UniProtKB"/>
</dbReference>
<dbReference type="GO" id="GO:0005886">
    <property type="term" value="C:plasma membrane"/>
    <property type="evidence" value="ECO:0007669"/>
    <property type="project" value="UniProtKB-SubCell"/>
</dbReference>
<dbReference type="GO" id="GO:0005509">
    <property type="term" value="F:calcium ion binding"/>
    <property type="evidence" value="ECO:0000250"/>
    <property type="project" value="UniProtKB"/>
</dbReference>
<dbReference type="GO" id="GO:0005525">
    <property type="term" value="F:GTP binding"/>
    <property type="evidence" value="ECO:0000250"/>
    <property type="project" value="UniProtKB"/>
</dbReference>
<dbReference type="GO" id="GO:0120297">
    <property type="term" value="F:histone dopaminyltransferase activity"/>
    <property type="evidence" value="ECO:0000250"/>
    <property type="project" value="UniProtKB"/>
</dbReference>
<dbReference type="GO" id="GO:0120295">
    <property type="term" value="F:histone serotonyltransferase activity"/>
    <property type="evidence" value="ECO:0000250"/>
    <property type="project" value="UniProtKB"/>
</dbReference>
<dbReference type="GO" id="GO:0008233">
    <property type="term" value="F:peptidase activity"/>
    <property type="evidence" value="ECO:0007669"/>
    <property type="project" value="UniProtKB-KW"/>
</dbReference>
<dbReference type="GO" id="GO:0120299">
    <property type="term" value="F:peptide histaminyltransferase activity"/>
    <property type="evidence" value="ECO:0000250"/>
    <property type="project" value="UniProtKB"/>
</dbReference>
<dbReference type="GO" id="GO:0120298">
    <property type="term" value="F:peptide noradrenalinyltransferase activity"/>
    <property type="evidence" value="ECO:0007669"/>
    <property type="project" value="RHEA"/>
</dbReference>
<dbReference type="GO" id="GO:0003810">
    <property type="term" value="F:protein-glutamine gamma-glutamyltransferase activity"/>
    <property type="evidence" value="ECO:0007669"/>
    <property type="project" value="UniProtKB-EC"/>
</dbReference>
<dbReference type="GO" id="GO:0050568">
    <property type="term" value="F:protein-glutamine glutaminase activity"/>
    <property type="evidence" value="ECO:0000250"/>
    <property type="project" value="UniProtKB"/>
</dbReference>
<dbReference type="GO" id="GO:0060348">
    <property type="term" value="P:bone development"/>
    <property type="evidence" value="ECO:0000250"/>
    <property type="project" value="UniProtKB"/>
</dbReference>
<dbReference type="GO" id="GO:1903351">
    <property type="term" value="P:cellular response to dopamine"/>
    <property type="evidence" value="ECO:0000250"/>
    <property type="project" value="UniProtKB"/>
</dbReference>
<dbReference type="GO" id="GO:1904015">
    <property type="term" value="P:cellular response to serotonin"/>
    <property type="evidence" value="ECO:0000250"/>
    <property type="project" value="UniProtKB"/>
</dbReference>
<dbReference type="GO" id="GO:0007399">
    <property type="term" value="P:nervous system development"/>
    <property type="evidence" value="ECO:0007669"/>
    <property type="project" value="UniProtKB-ARBA"/>
</dbReference>
<dbReference type="GO" id="GO:0018149">
    <property type="term" value="P:peptide cross-linking"/>
    <property type="evidence" value="ECO:0000250"/>
    <property type="project" value="UniProtKB"/>
</dbReference>
<dbReference type="GO" id="GO:0007200">
    <property type="term" value="P:phospholipase C-activating G protein-coupled receptor signaling pathway"/>
    <property type="evidence" value="ECO:0000250"/>
    <property type="project" value="UniProtKB"/>
</dbReference>
<dbReference type="GO" id="GO:0043065">
    <property type="term" value="P:positive regulation of apoptotic process"/>
    <property type="evidence" value="ECO:0000250"/>
    <property type="project" value="UniProtKB"/>
</dbReference>
<dbReference type="GO" id="GO:0043547">
    <property type="term" value="P:positive regulation of GTPase activity"/>
    <property type="evidence" value="ECO:0000250"/>
    <property type="project" value="UniProtKB"/>
</dbReference>
<dbReference type="GO" id="GO:0051057">
    <property type="term" value="P:positive regulation of small GTPase mediated signal transduction"/>
    <property type="evidence" value="ECO:0000250"/>
    <property type="project" value="UniProtKB"/>
</dbReference>
<dbReference type="GO" id="GO:0018277">
    <property type="term" value="P:protein deamination"/>
    <property type="evidence" value="ECO:0000250"/>
    <property type="project" value="UniProtKB"/>
</dbReference>
<dbReference type="GO" id="GO:0051260">
    <property type="term" value="P:protein homooligomerization"/>
    <property type="evidence" value="ECO:0000250"/>
    <property type="project" value="UniProtKB"/>
</dbReference>
<dbReference type="GO" id="GO:0006508">
    <property type="term" value="P:proteolysis"/>
    <property type="evidence" value="ECO:0007669"/>
    <property type="project" value="UniProtKB-KW"/>
</dbReference>
<dbReference type="GO" id="GO:2000425">
    <property type="term" value="P:regulation of apoptotic cell clearance"/>
    <property type="evidence" value="ECO:0000250"/>
    <property type="project" value="UniProtKB"/>
</dbReference>
<dbReference type="GO" id="GO:0042981">
    <property type="term" value="P:regulation of apoptotic process"/>
    <property type="evidence" value="ECO:0000250"/>
    <property type="project" value="UniProtKB"/>
</dbReference>
<dbReference type="FunFam" id="2.60.40.10:FF:000090">
    <property type="entry name" value="Protein-glutamine gamma-glutamyltransferase 2"/>
    <property type="match status" value="1"/>
</dbReference>
<dbReference type="FunFam" id="2.60.40.10:FF:002059">
    <property type="entry name" value="Protein-glutamine gamma-glutamyltransferase 2"/>
    <property type="match status" value="1"/>
</dbReference>
<dbReference type="FunFam" id="3.90.260.10:FF:000001">
    <property type="entry name" value="Protein-glutamine gamma-glutamyltransferase 2"/>
    <property type="match status" value="1"/>
</dbReference>
<dbReference type="FunFam" id="2.60.40.10:FF:002261">
    <property type="entry name" value="Transglutaminase 2, like"/>
    <property type="match status" value="1"/>
</dbReference>
<dbReference type="Gene3D" id="2.60.40.10">
    <property type="entry name" value="Immunoglobulins"/>
    <property type="match status" value="3"/>
</dbReference>
<dbReference type="Gene3D" id="3.90.260.10">
    <property type="entry name" value="Transglutaminase-like"/>
    <property type="match status" value="1"/>
</dbReference>
<dbReference type="InterPro" id="IPR013783">
    <property type="entry name" value="Ig-like_fold"/>
</dbReference>
<dbReference type="InterPro" id="IPR014756">
    <property type="entry name" value="Ig_E-set"/>
</dbReference>
<dbReference type="InterPro" id="IPR038765">
    <property type="entry name" value="Papain-like_cys_pep_sf"/>
</dbReference>
<dbReference type="InterPro" id="IPR050779">
    <property type="entry name" value="Transglutaminase"/>
</dbReference>
<dbReference type="InterPro" id="IPR002931">
    <property type="entry name" value="Transglutaminase-like"/>
</dbReference>
<dbReference type="InterPro" id="IPR036985">
    <property type="entry name" value="Transglutaminase-like_sf"/>
</dbReference>
<dbReference type="InterPro" id="IPR023608">
    <property type="entry name" value="Transglutaminase_animal"/>
</dbReference>
<dbReference type="InterPro" id="IPR013808">
    <property type="entry name" value="Transglutaminase_AS"/>
</dbReference>
<dbReference type="InterPro" id="IPR008958">
    <property type="entry name" value="Transglutaminase_C"/>
</dbReference>
<dbReference type="InterPro" id="IPR036238">
    <property type="entry name" value="Transglutaminase_C_sf"/>
</dbReference>
<dbReference type="InterPro" id="IPR001102">
    <property type="entry name" value="Transglutaminase_N"/>
</dbReference>
<dbReference type="PANTHER" id="PTHR11590:SF73">
    <property type="entry name" value="NOVEL TRANSGLUTAMINASE FAMILY PROTEIN-RELATED"/>
    <property type="match status" value="1"/>
</dbReference>
<dbReference type="PANTHER" id="PTHR11590">
    <property type="entry name" value="PROTEIN-GLUTAMINE GAMMA-GLUTAMYLTRANSFERASE"/>
    <property type="match status" value="1"/>
</dbReference>
<dbReference type="Pfam" id="PF00927">
    <property type="entry name" value="Transglut_C"/>
    <property type="match status" value="1"/>
</dbReference>
<dbReference type="Pfam" id="PF01841">
    <property type="entry name" value="Transglut_core"/>
    <property type="match status" value="1"/>
</dbReference>
<dbReference type="Pfam" id="PF00868">
    <property type="entry name" value="Transglut_N"/>
    <property type="match status" value="1"/>
</dbReference>
<dbReference type="PIRSF" id="PIRSF000459">
    <property type="entry name" value="TGM_EBP42"/>
    <property type="match status" value="1"/>
</dbReference>
<dbReference type="SMART" id="SM00460">
    <property type="entry name" value="TGc"/>
    <property type="match status" value="1"/>
</dbReference>
<dbReference type="SUPFAM" id="SSF54001">
    <property type="entry name" value="Cysteine proteinases"/>
    <property type="match status" value="1"/>
</dbReference>
<dbReference type="SUPFAM" id="SSF81296">
    <property type="entry name" value="E set domains"/>
    <property type="match status" value="1"/>
</dbReference>
<dbReference type="SUPFAM" id="SSF49309">
    <property type="entry name" value="Transglutaminase, two C-terminal domains"/>
    <property type="match status" value="2"/>
</dbReference>
<dbReference type="PROSITE" id="PS00547">
    <property type="entry name" value="TRANSGLUTAMINASES"/>
    <property type="match status" value="1"/>
</dbReference>
<reference key="1">
    <citation type="journal article" date="1995" name="Eur. J. Biochem.">
        <title>Tissue-type transglutaminase from red sea bream (Pagrus major). Sequence analysis of the cDNA and functional expression in Escherichia coli.</title>
        <authorList>
            <person name="Yasueda H."/>
            <person name="Nakanishi K."/>
            <person name="Kumazawa Y."/>
            <person name="Nagase K."/>
            <person name="Motoki M."/>
            <person name="Matsui H."/>
        </authorList>
    </citation>
    <scope>NUCLEOTIDE SEQUENCE [MRNA]</scope>
    <scope>PARTIAL PROTEIN SEQUENCE</scope>
    <source>
        <tissue>Liver</tissue>
    </source>
</reference>
<reference evidence="10" key="2">
    <citation type="journal article" date="2001" name="J. Biol. Chem.">
        <title>Crystal structure of red sea bream transglutaminase.</title>
        <authorList>
            <person name="Noguchi K."/>
            <person name="Ishikawa K."/>
            <person name="Yokoyama K."/>
            <person name="Ohtsuka T."/>
            <person name="Nio N."/>
            <person name="Suzuki E."/>
        </authorList>
    </citation>
    <scope>X-RAY CRYSTALLOGRAPHY (2.50 ANGSTROMS)</scope>
    <scope>ACTIVE SITE</scope>
</reference>
<name>TGM2_PAGMA</name>
<organism>
    <name type="scientific">Pagrus major</name>
    <name type="common">Red sea bream</name>
    <name type="synonym">Chrysophrys major</name>
    <dbReference type="NCBI Taxonomy" id="143350"/>
    <lineage>
        <taxon>Eukaryota</taxon>
        <taxon>Metazoa</taxon>
        <taxon>Chordata</taxon>
        <taxon>Craniata</taxon>
        <taxon>Vertebrata</taxon>
        <taxon>Euteleostomi</taxon>
        <taxon>Actinopterygii</taxon>
        <taxon>Neopterygii</taxon>
        <taxon>Teleostei</taxon>
        <taxon>Neoteleostei</taxon>
        <taxon>Acanthomorphata</taxon>
        <taxon>Eupercaria</taxon>
        <taxon>Spariformes</taxon>
        <taxon>Sparidae</taxon>
        <taxon>Pagrus</taxon>
    </lineage>
</organism>
<accession>P52181</accession>
<sequence length="695" mass="78216">MASYKGLIVDVNGRSHENNLAHRTREIDRERLIVRRGQPFSITLQCSDSLPPKHHLELVLHLGKRDEVVIKVQKEHGARDKWWFNQQGAQDEILLTLHSPANAVIGHYRLAVLVMSPDGHIVERADKISFHMLFNPWCRDDMVYLPDESKLQEYVMNEDGVIYMGTWDYIRSIPWNYGQFEDYVMDICFEVLDNSPAALKNSEMDIEHRSDPVYVGRTITAMVNSNGDRGVLTGRWEEPYTDGVAPYRWTGSVPILQQWSKAGVRPVKYGQCWVFAAVACTVLRCLGIPTRPITNFASAHDVDGNLSVDFLLNERLESLDSRQRSDSSWNFHCWVESWMSREDLPEGNDGWQVLDPTPQELSDGEFCCGPCPVAAIKEGNLGVKYDAPFVFAEVNADTIYWIVQKDGQRRKITEDHASVGKNISTKSVYGNHREDVTLHYKYPEGSQKEREVYKKAGRRVTEPSNEIAEQGRLQLSIKHAQPVFGTDFDVIVEVKNEGGRDAHAQLTMLAMAVTYNSLRRGECQRKTISVTVPAHKAHKEVMRLHYDDYVRCVSEHHLIRVKALLDAPGENGPIMTVANIPLSTPELLVQVPGKAVVWEPLTAYVSFTNPLPVPLKGGVFTLEGAGLLSATQIHVNGAVAPSGKVSVKLSFSPMRTGVRKLLVDFDSDRLKDVKGVTTVVVHKKYRSLITGLHTD</sequence>
<keyword id="KW-0002">3D-structure</keyword>
<keyword id="KW-0012">Acyltransferase</keyword>
<keyword id="KW-0106">Calcium</keyword>
<keyword id="KW-1003">Cell membrane</keyword>
<keyword id="KW-0158">Chromosome</keyword>
<keyword id="KW-0963">Cytoplasm</keyword>
<keyword id="KW-0903">Direct protein sequencing</keyword>
<keyword id="KW-0272">Extracellular matrix</keyword>
<keyword id="KW-0342">GTP-binding</keyword>
<keyword id="KW-0378">Hydrolase</keyword>
<keyword id="KW-0472">Membrane</keyword>
<keyword id="KW-0479">Metal-binding</keyword>
<keyword id="KW-0496">Mitochondrion</keyword>
<keyword id="KW-0547">Nucleotide-binding</keyword>
<keyword id="KW-0539">Nucleus</keyword>
<keyword id="KW-0645">Protease</keyword>
<keyword id="KW-0964">Secreted</keyword>
<keyword id="KW-0808">Transferase</keyword>
<proteinExistence type="evidence at protein level"/>
<evidence type="ECO:0000250" key="1">
    <source>
        <dbReference type="UniProtKB" id="P00488"/>
    </source>
</evidence>
<evidence type="ECO:0000250" key="2">
    <source>
        <dbReference type="UniProtKB" id="P08587"/>
    </source>
</evidence>
<evidence type="ECO:0000250" key="3">
    <source>
        <dbReference type="UniProtKB" id="P21980"/>
    </source>
</evidence>
<evidence type="ECO:0000250" key="4">
    <source>
        <dbReference type="UniProtKB" id="Q9WVJ6"/>
    </source>
</evidence>
<evidence type="ECO:0000255" key="5">
    <source>
        <dbReference type="PROSITE-ProRule" id="PRU10024"/>
    </source>
</evidence>
<evidence type="ECO:0000303" key="6">
    <source>
    </source>
</evidence>
<evidence type="ECO:0000303" key="7">
    <source>
    </source>
</evidence>
<evidence type="ECO:0000305" key="8"/>
<evidence type="ECO:0000305" key="9">
    <source>
    </source>
</evidence>
<evidence type="ECO:0007744" key="10">
    <source>
        <dbReference type="PDB" id="1G0D"/>
    </source>
</evidence>
<evidence type="ECO:0007829" key="11">
    <source>
        <dbReference type="PDB" id="1G0D"/>
    </source>
</evidence>
<feature type="chain" id="PRO_0000213710" description="Protein-glutamine gamma-glutamyltransferase 2">
    <location>
        <begin position="1"/>
        <end position="695"/>
    </location>
</feature>
<feature type="active site" evidence="5 9 10">
    <location>
        <position position="272"/>
    </location>
</feature>
<feature type="active site" evidence="5 9 10">
    <location>
        <position position="332"/>
    </location>
</feature>
<feature type="active site" evidence="5 9 10">
    <location>
        <position position="355"/>
    </location>
</feature>
<feature type="binding site" evidence="1">
    <location>
        <position position="395"/>
    </location>
    <ligand>
        <name>Ca(2+)</name>
        <dbReference type="ChEBI" id="CHEBI:29108"/>
    </ligand>
</feature>
<feature type="binding site" evidence="1">
    <location>
        <position position="397"/>
    </location>
    <ligand>
        <name>Ca(2+)</name>
        <dbReference type="ChEBI" id="CHEBI:29108"/>
    </ligand>
</feature>
<feature type="binding site" evidence="3">
    <location>
        <position position="434"/>
    </location>
    <ligand>
        <name>Ca(2+)</name>
        <dbReference type="ChEBI" id="CHEBI:29108"/>
    </ligand>
</feature>
<feature type="binding site" evidence="1">
    <location>
        <position position="444"/>
    </location>
    <ligand>
        <name>Ca(2+)</name>
        <dbReference type="ChEBI" id="CHEBI:29108"/>
    </ligand>
</feature>
<feature type="binding site" evidence="1">
    <location>
        <position position="449"/>
    </location>
    <ligand>
        <name>Ca(2+)</name>
        <dbReference type="ChEBI" id="CHEBI:29108"/>
    </ligand>
</feature>
<feature type="binding site" evidence="3">
    <location>
        <begin position="476"/>
        <end position="482"/>
    </location>
    <ligand>
        <name>GTP</name>
        <dbReference type="ChEBI" id="CHEBI:37565"/>
    </ligand>
</feature>
<feature type="binding site" evidence="3">
    <location>
        <begin position="578"/>
        <end position="581"/>
    </location>
    <ligand>
        <name>GTP</name>
        <dbReference type="ChEBI" id="CHEBI:37565"/>
    </ligand>
</feature>
<feature type="site" description="Important for catalytic activity" evidence="9 10">
    <location>
        <position position="515"/>
    </location>
</feature>
<feature type="strand" evidence="11">
    <location>
        <begin position="8"/>
        <end position="12"/>
    </location>
</feature>
<feature type="helix" evidence="11">
    <location>
        <begin position="15"/>
        <end position="21"/>
    </location>
</feature>
<feature type="turn" evidence="11">
    <location>
        <begin position="25"/>
        <end position="27"/>
    </location>
</feature>
<feature type="strand" evidence="11">
    <location>
        <begin position="29"/>
        <end position="31"/>
    </location>
</feature>
<feature type="strand" evidence="11">
    <location>
        <begin position="33"/>
        <end position="35"/>
    </location>
</feature>
<feature type="strand" evidence="11">
    <location>
        <begin position="40"/>
        <end position="48"/>
    </location>
</feature>
<feature type="strand" evidence="11">
    <location>
        <begin position="55"/>
        <end position="63"/>
    </location>
</feature>
<feature type="strand" evidence="11">
    <location>
        <begin position="67"/>
        <end position="76"/>
    </location>
</feature>
<feature type="strand" evidence="11">
    <location>
        <begin position="79"/>
        <end position="81"/>
    </location>
</feature>
<feature type="strand" evidence="11">
    <location>
        <begin position="83"/>
        <end position="88"/>
    </location>
</feature>
<feature type="strand" evidence="11">
    <location>
        <begin position="90"/>
        <end position="98"/>
    </location>
</feature>
<feature type="strand" evidence="11">
    <location>
        <begin position="106"/>
        <end position="115"/>
    </location>
</feature>
<feature type="strand" evidence="11">
    <location>
        <begin position="121"/>
        <end position="124"/>
    </location>
</feature>
<feature type="strand" evidence="11">
    <location>
        <begin position="128"/>
        <end position="133"/>
    </location>
</feature>
<feature type="helix" evidence="11">
    <location>
        <begin position="148"/>
        <end position="154"/>
    </location>
</feature>
<feature type="strand" evidence="11">
    <location>
        <begin position="159"/>
        <end position="166"/>
    </location>
</feature>
<feature type="strand" evidence="11">
    <location>
        <begin position="169"/>
        <end position="176"/>
    </location>
</feature>
<feature type="helix" evidence="11">
    <location>
        <begin position="184"/>
        <end position="193"/>
    </location>
</feature>
<feature type="helix" evidence="11">
    <location>
        <begin position="196"/>
        <end position="200"/>
    </location>
</feature>
<feature type="helix" evidence="11">
    <location>
        <begin position="202"/>
        <end position="208"/>
    </location>
</feature>
<feature type="helix" evidence="11">
    <location>
        <begin position="212"/>
        <end position="223"/>
    </location>
</feature>
<feature type="turn" evidence="11">
    <location>
        <begin position="227"/>
        <end position="229"/>
    </location>
</feature>
<feature type="strand" evidence="11">
    <location>
        <begin position="231"/>
        <end position="234"/>
    </location>
</feature>
<feature type="helix" evidence="11">
    <location>
        <begin position="246"/>
        <end position="248"/>
    </location>
</feature>
<feature type="strand" evidence="11">
    <location>
        <begin position="250"/>
        <end position="252"/>
    </location>
</feature>
<feature type="helix" evidence="11">
    <location>
        <begin position="253"/>
        <end position="261"/>
    </location>
</feature>
<feature type="strand" evidence="11">
    <location>
        <begin position="267"/>
        <end position="270"/>
    </location>
</feature>
<feature type="helix" evidence="11">
    <location>
        <begin position="272"/>
        <end position="286"/>
    </location>
</feature>
<feature type="strand" evidence="11">
    <location>
        <begin position="290"/>
        <end position="298"/>
    </location>
</feature>
<feature type="turn" evidence="11">
    <location>
        <begin position="301"/>
        <end position="304"/>
    </location>
</feature>
<feature type="strand" evidence="11">
    <location>
        <begin position="306"/>
        <end position="312"/>
    </location>
</feature>
<feature type="strand" evidence="11">
    <location>
        <begin position="327"/>
        <end position="339"/>
    </location>
</feature>
<feature type="strand" evidence="11">
    <location>
        <begin position="350"/>
        <end position="355"/>
    </location>
</feature>
<feature type="turn" evidence="11">
    <location>
        <begin position="363"/>
        <end position="365"/>
    </location>
</feature>
<feature type="strand" evidence="11">
    <location>
        <begin position="368"/>
        <end position="372"/>
    </location>
</feature>
<feature type="helix" evidence="11">
    <location>
        <begin position="373"/>
        <end position="378"/>
    </location>
</feature>
<feature type="turn" evidence="11">
    <location>
        <begin position="384"/>
        <end position="386"/>
    </location>
</feature>
<feature type="helix" evidence="11">
    <location>
        <begin position="387"/>
        <end position="395"/>
    </location>
</feature>
<feature type="strand" evidence="11">
    <location>
        <begin position="397"/>
        <end position="403"/>
    </location>
</feature>
<feature type="strand" evidence="11">
    <location>
        <begin position="409"/>
        <end position="411"/>
    </location>
</feature>
<feature type="strand" evidence="11">
    <location>
        <begin position="413"/>
        <end position="416"/>
    </location>
</feature>
<feature type="strand" evidence="11">
    <location>
        <begin position="424"/>
        <end position="426"/>
    </location>
</feature>
<feature type="strand" evidence="11">
    <location>
        <begin position="428"/>
        <end position="431"/>
    </location>
</feature>
<feature type="strand" evidence="11">
    <location>
        <begin position="433"/>
        <end position="435"/>
    </location>
</feature>
<feature type="helix" evidence="11">
    <location>
        <begin position="437"/>
        <end position="440"/>
    </location>
</feature>
<feature type="helix" evidence="11">
    <location>
        <begin position="447"/>
        <end position="456"/>
    </location>
</feature>
<feature type="strand" evidence="11">
    <location>
        <begin position="473"/>
        <end position="478"/>
    </location>
</feature>
<feature type="strand" evidence="11">
    <location>
        <begin position="488"/>
        <end position="496"/>
    </location>
</feature>
<feature type="strand" evidence="11">
    <location>
        <begin position="498"/>
        <end position="500"/>
    </location>
</feature>
<feature type="strand" evidence="11">
    <location>
        <begin position="502"/>
        <end position="513"/>
    </location>
</feature>
<feature type="strand" evidence="11">
    <location>
        <begin position="525"/>
        <end position="532"/>
    </location>
</feature>
<feature type="strand" evidence="11">
    <location>
        <begin position="536"/>
        <end position="544"/>
    </location>
</feature>
<feature type="helix" evidence="11">
    <location>
        <begin position="546"/>
        <end position="549"/>
    </location>
</feature>
<feature type="turn" evidence="11">
    <location>
        <begin position="550"/>
        <end position="552"/>
    </location>
</feature>
<feature type="strand" evidence="11">
    <location>
        <begin position="558"/>
        <end position="566"/>
    </location>
</feature>
<feature type="strand" evidence="11">
    <location>
        <begin position="573"/>
        <end position="581"/>
    </location>
</feature>
<feature type="strand" evidence="11">
    <location>
        <begin position="588"/>
        <end position="590"/>
    </location>
</feature>
<feature type="strand" evidence="11">
    <location>
        <begin position="601"/>
        <end position="608"/>
    </location>
</feature>
<feature type="strand" evidence="11">
    <location>
        <begin position="611"/>
        <end position="613"/>
    </location>
</feature>
<feature type="strand" evidence="11">
    <location>
        <begin position="615"/>
        <end position="617"/>
    </location>
</feature>
<feature type="strand" evidence="11">
    <location>
        <begin position="619"/>
        <end position="624"/>
    </location>
</feature>
<feature type="turn" evidence="11">
    <location>
        <begin position="625"/>
        <end position="627"/>
    </location>
</feature>
<feature type="strand" evidence="11">
    <location>
        <begin position="628"/>
        <end position="634"/>
    </location>
</feature>
<feature type="strand" evidence="11">
    <location>
        <begin position="636"/>
        <end position="639"/>
    </location>
</feature>
<feature type="strand" evidence="11">
    <location>
        <begin position="644"/>
        <end position="651"/>
    </location>
</feature>
<feature type="strand" evidence="11">
    <location>
        <begin position="657"/>
        <end position="666"/>
    </location>
</feature>
<feature type="strand" evidence="11">
    <location>
        <begin position="673"/>
        <end position="682"/>
    </location>
</feature>
<protein>
    <recommendedName>
        <fullName evidence="8">Protein-glutamine gamma-glutamyltransferase 2</fullName>
        <ecNumber evidence="3">2.3.2.13</ecNumber>
    </recommendedName>
    <alternativeName>
        <fullName evidence="6">Fish-derived transglutaminase</fullName>
        <shortName evidence="6">FTG</shortName>
    </alternativeName>
    <alternativeName>
        <fullName evidence="8">Isopeptidase TGM2</fullName>
        <ecNumber evidence="3">3.4.-.-</ecNumber>
    </alternativeName>
    <alternativeName>
        <fullName evidence="8">Protein-glutamine deamidase TGM2</fullName>
        <ecNumber evidence="3">3.5.1.44</ecNumber>
    </alternativeName>
    <alternativeName>
        <fullName evidence="8">Protein-glutamine dopaminyltransferase TGM2</fullName>
        <ecNumber evidence="3">2.3.1.-</ecNumber>
    </alternativeName>
    <alternativeName>
        <fullName evidence="8">Protein-glutamine histaminyltransferase TGM2</fullName>
        <ecNumber evidence="3">2.3.1.-</ecNumber>
    </alternativeName>
    <alternativeName>
        <fullName evidence="8">Protein-glutamine noradrenalinyltransferase TGM2</fullName>
        <ecNumber evidence="2">2.3.1.-</ecNumber>
    </alternativeName>
    <alternativeName>
        <fullName evidence="8">Protein-glutamine serotonyltransferase TGM2</fullName>
        <ecNumber evidence="3">2.3.1.-</ecNumber>
    </alternativeName>
    <alternativeName>
        <fullName evidence="7">Tissue transglutaminase</fullName>
    </alternativeName>
    <alternativeName>
        <fullName evidence="7">Tissue-type transglutaminase</fullName>
    </alternativeName>
    <alternativeName>
        <fullName evidence="3">Transglutaminase-2</fullName>
        <shortName evidence="3">TGase-2</shortName>
    </alternativeName>
</protein>